<feature type="chain" id="PRO_1000081934" description="Adenine deaminase">
    <location>
        <begin position="1"/>
        <end position="337"/>
    </location>
</feature>
<feature type="active site" description="Proton donor" evidence="1">
    <location>
        <position position="200"/>
    </location>
</feature>
<feature type="binding site" evidence="1">
    <location>
        <position position="17"/>
    </location>
    <ligand>
        <name>Zn(2+)</name>
        <dbReference type="ChEBI" id="CHEBI:29105"/>
        <note>catalytic</note>
    </ligand>
</feature>
<feature type="binding site" evidence="1">
    <location>
        <position position="19"/>
    </location>
    <ligand>
        <name>Zn(2+)</name>
        <dbReference type="ChEBI" id="CHEBI:29105"/>
        <note>catalytic</note>
    </ligand>
</feature>
<feature type="binding site" evidence="1">
    <location>
        <position position="197"/>
    </location>
    <ligand>
        <name>Zn(2+)</name>
        <dbReference type="ChEBI" id="CHEBI:29105"/>
        <note>catalytic</note>
    </ligand>
</feature>
<feature type="binding site" evidence="1">
    <location>
        <position position="278"/>
    </location>
    <ligand>
        <name>Zn(2+)</name>
        <dbReference type="ChEBI" id="CHEBI:29105"/>
        <note>catalytic</note>
    </ligand>
</feature>
<feature type="binding site" evidence="1">
    <location>
        <position position="279"/>
    </location>
    <ligand>
        <name>substrate</name>
    </ligand>
</feature>
<feature type="site" description="Important for catalytic activity" evidence="1">
    <location>
        <position position="221"/>
    </location>
</feature>
<evidence type="ECO:0000255" key="1">
    <source>
        <dbReference type="HAMAP-Rule" id="MF_01962"/>
    </source>
</evidence>
<gene>
    <name type="ordered locus">ZMO0971</name>
</gene>
<proteinExistence type="inferred from homology"/>
<keyword id="KW-0378">Hydrolase</keyword>
<keyword id="KW-0479">Metal-binding</keyword>
<keyword id="KW-0546">Nucleotide metabolism</keyword>
<keyword id="KW-1185">Reference proteome</keyword>
<keyword id="KW-0862">Zinc</keyword>
<comment type="function">
    <text evidence="1">Catalyzes the hydrolytic deamination of adenine to hypoxanthine. Plays an important role in the purine salvage pathway and in nitrogen catabolism.</text>
</comment>
<comment type="catalytic activity">
    <reaction evidence="1">
        <text>adenine + H2O + H(+) = hypoxanthine + NH4(+)</text>
        <dbReference type="Rhea" id="RHEA:23688"/>
        <dbReference type="ChEBI" id="CHEBI:15377"/>
        <dbReference type="ChEBI" id="CHEBI:15378"/>
        <dbReference type="ChEBI" id="CHEBI:16708"/>
        <dbReference type="ChEBI" id="CHEBI:17368"/>
        <dbReference type="ChEBI" id="CHEBI:28938"/>
        <dbReference type="EC" id="3.5.4.2"/>
    </reaction>
</comment>
<comment type="cofactor">
    <cofactor evidence="1">
        <name>Zn(2+)</name>
        <dbReference type="ChEBI" id="CHEBI:29105"/>
    </cofactor>
    <text evidence="1">Binds 1 zinc ion per subunit.</text>
</comment>
<comment type="similarity">
    <text evidence="1">Belongs to the metallo-dependent hydrolases superfamily. Adenosine and AMP deaminases family. Adenine deaminase type 2 subfamily.</text>
</comment>
<dbReference type="EC" id="3.5.4.2" evidence="1"/>
<dbReference type="EMBL" id="AE008692">
    <property type="protein sequence ID" value="AAV89595.1"/>
    <property type="molecule type" value="Genomic_DNA"/>
</dbReference>
<dbReference type="RefSeq" id="WP_011240824.1">
    <property type="nucleotide sequence ID" value="NZ_CP035711.1"/>
</dbReference>
<dbReference type="SMR" id="Q5NNW5"/>
<dbReference type="STRING" id="264203.ZMO0971"/>
<dbReference type="KEGG" id="zmo:ZMO0971"/>
<dbReference type="eggNOG" id="COG1816">
    <property type="taxonomic scope" value="Bacteria"/>
</dbReference>
<dbReference type="HOGENOM" id="CLU_039228_7_0_5"/>
<dbReference type="Proteomes" id="UP000001173">
    <property type="component" value="Chromosome"/>
</dbReference>
<dbReference type="GO" id="GO:0005829">
    <property type="term" value="C:cytosol"/>
    <property type="evidence" value="ECO:0007669"/>
    <property type="project" value="TreeGrafter"/>
</dbReference>
<dbReference type="GO" id="GO:0000034">
    <property type="term" value="F:adenine deaminase activity"/>
    <property type="evidence" value="ECO:0007669"/>
    <property type="project" value="UniProtKB-UniRule"/>
</dbReference>
<dbReference type="GO" id="GO:0008270">
    <property type="term" value="F:zinc ion binding"/>
    <property type="evidence" value="ECO:0007669"/>
    <property type="project" value="UniProtKB-UniRule"/>
</dbReference>
<dbReference type="GO" id="GO:0006146">
    <property type="term" value="P:adenine catabolic process"/>
    <property type="evidence" value="ECO:0007669"/>
    <property type="project" value="UniProtKB-UniRule"/>
</dbReference>
<dbReference type="GO" id="GO:0043103">
    <property type="term" value="P:hypoxanthine salvage"/>
    <property type="evidence" value="ECO:0007669"/>
    <property type="project" value="UniProtKB-UniRule"/>
</dbReference>
<dbReference type="GO" id="GO:0009117">
    <property type="term" value="P:nucleotide metabolic process"/>
    <property type="evidence" value="ECO:0007669"/>
    <property type="project" value="UniProtKB-KW"/>
</dbReference>
<dbReference type="CDD" id="cd01320">
    <property type="entry name" value="ADA"/>
    <property type="match status" value="1"/>
</dbReference>
<dbReference type="FunFam" id="3.20.20.140:FF:000039">
    <property type="entry name" value="Adenine deaminase"/>
    <property type="match status" value="1"/>
</dbReference>
<dbReference type="Gene3D" id="3.20.20.140">
    <property type="entry name" value="Metal-dependent hydrolases"/>
    <property type="match status" value="1"/>
</dbReference>
<dbReference type="HAMAP" id="MF_01962">
    <property type="entry name" value="Adenine_deaminase"/>
    <property type="match status" value="1"/>
</dbReference>
<dbReference type="InterPro" id="IPR001365">
    <property type="entry name" value="A_deaminase_dom"/>
</dbReference>
<dbReference type="InterPro" id="IPR028892">
    <property type="entry name" value="ADE"/>
</dbReference>
<dbReference type="InterPro" id="IPR006330">
    <property type="entry name" value="Ado/ade_deaminase"/>
</dbReference>
<dbReference type="InterPro" id="IPR032466">
    <property type="entry name" value="Metal_Hydrolase"/>
</dbReference>
<dbReference type="NCBIfam" id="TIGR01430">
    <property type="entry name" value="aden_deam"/>
    <property type="match status" value="1"/>
</dbReference>
<dbReference type="NCBIfam" id="NF006850">
    <property type="entry name" value="PRK09358.1-6"/>
    <property type="match status" value="1"/>
</dbReference>
<dbReference type="PANTHER" id="PTHR43114">
    <property type="entry name" value="ADENINE DEAMINASE"/>
    <property type="match status" value="1"/>
</dbReference>
<dbReference type="PANTHER" id="PTHR43114:SF6">
    <property type="entry name" value="ADENINE DEAMINASE"/>
    <property type="match status" value="1"/>
</dbReference>
<dbReference type="Pfam" id="PF00962">
    <property type="entry name" value="A_deaminase"/>
    <property type="match status" value="1"/>
</dbReference>
<dbReference type="SUPFAM" id="SSF51556">
    <property type="entry name" value="Metallo-dependent hydrolases"/>
    <property type="match status" value="1"/>
</dbReference>
<sequence length="337" mass="37881">MNNLIKFIAALPKAELHLHIEGSLEPELMFELAKRNKVTLPFPDVESVKAAYNFNNLQEFLDIYYQGTNVLKTEEDFCDLAMAYFYRAHRDNVLHSEIFFDPQSHTERGIPFNVVMNGLLAAITKAEAELGMSVQLIMCFLRHLDEESAFATLRMAEPFLDKIAGVGLDSSEVGNPPSKFRHVFAEARQKGLKLVAHAGEEGDASYIKEALDILNIDRIDHGNRITEDRLLMTRAARSAIALTICPLSNQKLQVVPDLRNHPLPYLLRQGLRVTINSDDPAYFGGYVNDNYKALAEYCGLKAADFVEIARNSFLGSFLPDQTVAAYLDVLDKYVDSF</sequence>
<accession>Q5NNW5</accession>
<protein>
    <recommendedName>
        <fullName evidence="1">Adenine deaminase</fullName>
        <shortName evidence="1">ADE</shortName>
        <ecNumber evidence="1">3.5.4.2</ecNumber>
    </recommendedName>
    <alternativeName>
        <fullName evidence="1">Adenine aminohydrolase</fullName>
        <shortName evidence="1">AAH</shortName>
    </alternativeName>
</protein>
<name>ADE_ZYMMO</name>
<reference key="1">
    <citation type="journal article" date="2005" name="Nat. Biotechnol.">
        <title>The genome sequence of the ethanologenic bacterium Zymomonas mobilis ZM4.</title>
        <authorList>
            <person name="Seo J.-S."/>
            <person name="Chong H."/>
            <person name="Park H.S."/>
            <person name="Yoon K.-O."/>
            <person name="Jung C."/>
            <person name="Kim J.J."/>
            <person name="Hong J.H."/>
            <person name="Kim H."/>
            <person name="Kim J.-H."/>
            <person name="Kil J.-I."/>
            <person name="Park C.J."/>
            <person name="Oh H.-M."/>
            <person name="Lee J.-S."/>
            <person name="Jin S.-J."/>
            <person name="Um H.-W."/>
            <person name="Lee H.-J."/>
            <person name="Oh S.-J."/>
            <person name="Kim J.Y."/>
            <person name="Kang H.L."/>
            <person name="Lee S.Y."/>
            <person name="Lee K.J."/>
            <person name="Kang H.S."/>
        </authorList>
    </citation>
    <scope>NUCLEOTIDE SEQUENCE [LARGE SCALE GENOMIC DNA]</scope>
    <source>
        <strain>ATCC 31821 / ZM4 / CP4</strain>
    </source>
</reference>
<organism>
    <name type="scientific">Zymomonas mobilis subsp. mobilis (strain ATCC 31821 / ZM4 / CP4)</name>
    <dbReference type="NCBI Taxonomy" id="264203"/>
    <lineage>
        <taxon>Bacteria</taxon>
        <taxon>Pseudomonadati</taxon>
        <taxon>Pseudomonadota</taxon>
        <taxon>Alphaproteobacteria</taxon>
        <taxon>Sphingomonadales</taxon>
        <taxon>Zymomonadaceae</taxon>
        <taxon>Zymomonas</taxon>
    </lineage>
</organism>